<feature type="chain" id="PRO_1000143576" description="NADH-quinone oxidoreductase subunit H">
    <location>
        <begin position="1"/>
        <end position="333"/>
    </location>
</feature>
<feature type="transmembrane region" description="Helical" evidence="1">
    <location>
        <begin position="15"/>
        <end position="35"/>
    </location>
</feature>
<feature type="transmembrane region" description="Helical" evidence="1">
    <location>
        <begin position="88"/>
        <end position="108"/>
    </location>
</feature>
<feature type="transmembrane region" description="Helical" evidence="1">
    <location>
        <begin position="117"/>
        <end position="137"/>
    </location>
</feature>
<feature type="transmembrane region" description="Helical" evidence="1">
    <location>
        <begin position="159"/>
        <end position="179"/>
    </location>
</feature>
<feature type="transmembrane region" description="Helical" evidence="1">
    <location>
        <begin position="191"/>
        <end position="211"/>
    </location>
</feature>
<feature type="transmembrane region" description="Helical" evidence="1">
    <location>
        <begin position="239"/>
        <end position="259"/>
    </location>
</feature>
<feature type="transmembrane region" description="Helical" evidence="1">
    <location>
        <begin position="272"/>
        <end position="294"/>
    </location>
</feature>
<feature type="transmembrane region" description="Helical" evidence="1">
    <location>
        <begin position="313"/>
        <end position="333"/>
    </location>
</feature>
<gene>
    <name evidence="1" type="primary">nuoH</name>
    <name type="ordered locus">BcerKBAB4_5094</name>
</gene>
<comment type="function">
    <text evidence="1">NDH-1 shuttles electrons from NADH, via FMN and iron-sulfur (Fe-S) centers, to quinones in the respiratory chain. The immediate electron acceptor for the enzyme in this species is believed to be ubiquinone. Couples the redox reaction to proton translocation (for every two electrons transferred, four hydrogen ions are translocated across the cytoplasmic membrane), and thus conserves the redox energy in a proton gradient. This subunit may bind ubiquinone.</text>
</comment>
<comment type="catalytic activity">
    <reaction evidence="1">
        <text>a quinone + NADH + 5 H(+)(in) = a quinol + NAD(+) + 4 H(+)(out)</text>
        <dbReference type="Rhea" id="RHEA:57888"/>
        <dbReference type="ChEBI" id="CHEBI:15378"/>
        <dbReference type="ChEBI" id="CHEBI:24646"/>
        <dbReference type="ChEBI" id="CHEBI:57540"/>
        <dbReference type="ChEBI" id="CHEBI:57945"/>
        <dbReference type="ChEBI" id="CHEBI:132124"/>
    </reaction>
</comment>
<comment type="subunit">
    <text evidence="1">NDH-1 is composed of 14 different subunits. Subunits NuoA, H, J, K, L, M, N constitute the membrane sector of the complex.</text>
</comment>
<comment type="subcellular location">
    <subcellularLocation>
        <location evidence="1">Cell membrane</location>
        <topology evidence="1">Multi-pass membrane protein</topology>
    </subcellularLocation>
</comment>
<comment type="similarity">
    <text evidence="1">Belongs to the complex I subunit 1 family.</text>
</comment>
<name>NUOH_BACMK</name>
<proteinExistence type="inferred from homology"/>
<reference key="1">
    <citation type="journal article" date="2008" name="Chem. Biol. Interact.">
        <title>Extending the Bacillus cereus group genomics to putative food-borne pathogens of different toxicity.</title>
        <authorList>
            <person name="Lapidus A."/>
            <person name="Goltsman E."/>
            <person name="Auger S."/>
            <person name="Galleron N."/>
            <person name="Segurens B."/>
            <person name="Dossat C."/>
            <person name="Land M.L."/>
            <person name="Broussolle V."/>
            <person name="Brillard J."/>
            <person name="Guinebretiere M.-H."/>
            <person name="Sanchis V."/>
            <person name="Nguen-the C."/>
            <person name="Lereclus D."/>
            <person name="Richardson P."/>
            <person name="Wincker P."/>
            <person name="Weissenbach J."/>
            <person name="Ehrlich S.D."/>
            <person name="Sorokin A."/>
        </authorList>
    </citation>
    <scope>NUCLEOTIDE SEQUENCE [LARGE SCALE GENOMIC DNA]</scope>
    <source>
        <strain>KBAB4</strain>
    </source>
</reference>
<dbReference type="EC" id="7.1.1.-" evidence="1"/>
<dbReference type="EMBL" id="CP000903">
    <property type="protein sequence ID" value="ABY46240.1"/>
    <property type="molecule type" value="Genomic_DNA"/>
</dbReference>
<dbReference type="RefSeq" id="WP_002143859.1">
    <property type="nucleotide sequence ID" value="NC_010184.1"/>
</dbReference>
<dbReference type="SMR" id="A9VS94"/>
<dbReference type="KEGG" id="bwe:BcerKBAB4_5094"/>
<dbReference type="eggNOG" id="COG1005">
    <property type="taxonomic scope" value="Bacteria"/>
</dbReference>
<dbReference type="HOGENOM" id="CLU_015134_0_1_9"/>
<dbReference type="Proteomes" id="UP000002154">
    <property type="component" value="Chromosome"/>
</dbReference>
<dbReference type="GO" id="GO:0005886">
    <property type="term" value="C:plasma membrane"/>
    <property type="evidence" value="ECO:0007669"/>
    <property type="project" value="UniProtKB-SubCell"/>
</dbReference>
<dbReference type="GO" id="GO:0003954">
    <property type="term" value="F:NADH dehydrogenase activity"/>
    <property type="evidence" value="ECO:0007669"/>
    <property type="project" value="TreeGrafter"/>
</dbReference>
<dbReference type="GO" id="GO:0016655">
    <property type="term" value="F:oxidoreductase activity, acting on NAD(P)H, quinone or similar compound as acceptor"/>
    <property type="evidence" value="ECO:0007669"/>
    <property type="project" value="UniProtKB-UniRule"/>
</dbReference>
<dbReference type="GO" id="GO:0048038">
    <property type="term" value="F:quinone binding"/>
    <property type="evidence" value="ECO:0007669"/>
    <property type="project" value="UniProtKB-KW"/>
</dbReference>
<dbReference type="GO" id="GO:0009060">
    <property type="term" value="P:aerobic respiration"/>
    <property type="evidence" value="ECO:0007669"/>
    <property type="project" value="TreeGrafter"/>
</dbReference>
<dbReference type="HAMAP" id="MF_01350">
    <property type="entry name" value="NDH1_NuoH"/>
    <property type="match status" value="1"/>
</dbReference>
<dbReference type="InterPro" id="IPR001694">
    <property type="entry name" value="NADH_UbQ_OxRdtase_su1/FPO"/>
</dbReference>
<dbReference type="InterPro" id="IPR018086">
    <property type="entry name" value="NADH_UbQ_OxRdtase_su1_CS"/>
</dbReference>
<dbReference type="NCBIfam" id="NF004741">
    <property type="entry name" value="PRK06076.1-2"/>
    <property type="match status" value="1"/>
</dbReference>
<dbReference type="PANTHER" id="PTHR11432">
    <property type="entry name" value="NADH DEHYDROGENASE SUBUNIT 1"/>
    <property type="match status" value="1"/>
</dbReference>
<dbReference type="PANTHER" id="PTHR11432:SF3">
    <property type="entry name" value="NADH-UBIQUINONE OXIDOREDUCTASE CHAIN 1"/>
    <property type="match status" value="1"/>
</dbReference>
<dbReference type="Pfam" id="PF00146">
    <property type="entry name" value="NADHdh"/>
    <property type="match status" value="1"/>
</dbReference>
<dbReference type="PROSITE" id="PS00668">
    <property type="entry name" value="COMPLEX1_ND1_2"/>
    <property type="match status" value="1"/>
</dbReference>
<sequence length="333" mass="36911">MIETLLQSPSSWTNFFIFFGLAVLLLFAVLGFVTYGILAERKVMGFMQGRIGPNQVGGRFGLLQTVADVLKLLLKEDSIPKAADKPLFILAPVIAFAPAFMVLAVIPFTDKFQFADIGVGLLYYIAVSGITTIGVVTGGWASNNKYSLLGGMRAAAQMISYEIPLVMSVIGVVLLAGSLNLNEIVAAQEKVWYIFAQPIGFVIFLIAAVAELNRTPFDLPEAESELVSGYHTEYSGFRWAFFMLSEYVYFFGMSSLITVLFLGGWNPVMFLGFIPGAVWFALKFSSVVFLLIWFRVTFPRIRGDQLMEFGWKILLPIALANIFLTALIKELFF</sequence>
<protein>
    <recommendedName>
        <fullName evidence="1">NADH-quinone oxidoreductase subunit H</fullName>
        <ecNumber evidence="1">7.1.1.-</ecNumber>
    </recommendedName>
    <alternativeName>
        <fullName evidence="1">NADH dehydrogenase I subunit H</fullName>
    </alternativeName>
    <alternativeName>
        <fullName evidence="1">NDH-1 subunit H</fullName>
    </alternativeName>
</protein>
<evidence type="ECO:0000255" key="1">
    <source>
        <dbReference type="HAMAP-Rule" id="MF_01350"/>
    </source>
</evidence>
<keyword id="KW-1003">Cell membrane</keyword>
<keyword id="KW-0472">Membrane</keyword>
<keyword id="KW-0520">NAD</keyword>
<keyword id="KW-0874">Quinone</keyword>
<keyword id="KW-1278">Translocase</keyword>
<keyword id="KW-0812">Transmembrane</keyword>
<keyword id="KW-1133">Transmembrane helix</keyword>
<keyword id="KW-0830">Ubiquinone</keyword>
<organism>
    <name type="scientific">Bacillus mycoides (strain KBAB4)</name>
    <name type="common">Bacillus weihenstephanensis</name>
    <dbReference type="NCBI Taxonomy" id="315730"/>
    <lineage>
        <taxon>Bacteria</taxon>
        <taxon>Bacillati</taxon>
        <taxon>Bacillota</taxon>
        <taxon>Bacilli</taxon>
        <taxon>Bacillales</taxon>
        <taxon>Bacillaceae</taxon>
        <taxon>Bacillus</taxon>
        <taxon>Bacillus cereus group</taxon>
    </lineage>
</organism>
<accession>A9VS94</accession>